<reference key="1">
    <citation type="journal article" date="1996" name="Arch. Virol.">
        <title>Species-specific and interspecies relatedness of NSP1 sequences in human, porcine, bovine, feline, and equine rotavirus strains.</title>
        <authorList>
            <person name="Kojima K."/>
            <person name="Taniguchi K."/>
            <person name="Kobayashi N."/>
        </authorList>
    </citation>
    <scope>NUCLEOTIDE SEQUENCE [GENOMIC RNA]</scope>
</reference>
<sequence length="486" mass="57680">MATFKDACYHYKRINKLNNNSLKLGVNDTWRPSPPTKYKGWCLDCCQHTDLTYCSGCTMYHVCQWCSQYGRCFLDNEPHLLRMRTFKNEVTKDDLKNLIDMYETLFPMNHKIVCRFINTARQHKCRNECMTQWYNHLLMPITLQSLSIELDGDVYYVFGYYDNMNNINQTPFSFINLVDIYDKLLLDDVNFTRMSFLPASLQQEYALRYFSKSRFINEQRKCVNDSHFSINVLENLHNPSFKIQITRNCSELSFDWNEACKLVKNVSAYFDMLKTSHIEFYSVSTRCRIFTQCKLKMASKLIKPNYITSNHKTLATEVHNCKWCSVNNSYTVWNDFRIKKIYDNIFNFLRALVKSNVNIGHCSSQEKIYEYVKDVLNVCDDERWKTSIMEIFNCLEPVELDDVKYVLFNHEINWDVINVLVHSIGKVPQILTLENVITIMQSIIYEWFDIRYMRNTPMVTFTIDKLRRLYTGLKTVEYDSGISDIE</sequence>
<dbReference type="EMBL" id="D38152">
    <property type="protein sequence ID" value="BAA20543.1"/>
    <property type="molecule type" value="Genomic_RNA"/>
</dbReference>
<dbReference type="GO" id="GO:0030430">
    <property type="term" value="C:host cell cytoplasm"/>
    <property type="evidence" value="ECO:0007669"/>
    <property type="project" value="UniProtKB-UniRule"/>
</dbReference>
<dbReference type="GO" id="GO:0044163">
    <property type="term" value="C:host cytoskeleton"/>
    <property type="evidence" value="ECO:0007669"/>
    <property type="project" value="UniProtKB-SubCell"/>
</dbReference>
<dbReference type="GO" id="GO:0046872">
    <property type="term" value="F:metal ion binding"/>
    <property type="evidence" value="ECO:0007669"/>
    <property type="project" value="UniProtKB-UniRule"/>
</dbReference>
<dbReference type="GO" id="GO:0003723">
    <property type="term" value="F:RNA binding"/>
    <property type="evidence" value="ECO:0007669"/>
    <property type="project" value="UniProtKB-UniRule"/>
</dbReference>
<dbReference type="GO" id="GO:0039548">
    <property type="term" value="P:symbiont-mediated suppression of host cytoplasmic pattern recognition receptor signaling pathway via inhibition of IRF3 activity"/>
    <property type="evidence" value="ECO:0007669"/>
    <property type="project" value="UniProtKB-UniRule"/>
</dbReference>
<dbReference type="GO" id="GO:0039557">
    <property type="term" value="P:symbiont-mediated suppression of host cytoplasmic pattern recognition receptor signaling pathway via inhibition of IRF7 activity"/>
    <property type="evidence" value="ECO:0007669"/>
    <property type="project" value="UniProtKB-UniRule"/>
</dbReference>
<dbReference type="GO" id="GO:0085034">
    <property type="term" value="P:symbiont-mediated suppression of host NF-kappaB cascade"/>
    <property type="evidence" value="ECO:0007669"/>
    <property type="project" value="UniProtKB-UniRule"/>
</dbReference>
<dbReference type="HAMAP" id="MF_04088">
    <property type="entry name" value="ROTA_NSP1"/>
    <property type="match status" value="1"/>
</dbReference>
<dbReference type="InterPro" id="IPR002148">
    <property type="entry name" value="Rotavirus_NSP1"/>
</dbReference>
<dbReference type="Pfam" id="PF00981">
    <property type="entry name" value="Rota_NS53"/>
    <property type="match status" value="1"/>
</dbReference>
<accession>O40627</accession>
<feature type="chain" id="PRO_0000369083" description="Non-structural protein 1">
    <location>
        <begin position="1"/>
        <end position="486"/>
    </location>
</feature>
<feature type="region of interest" description="RNA-binding" evidence="1">
    <location>
        <begin position="1"/>
        <end position="81"/>
    </location>
</feature>
<feature type="region of interest" description="Zinc-binding domain" evidence="1">
    <location>
        <begin position="42"/>
        <end position="79"/>
    </location>
</feature>
<feature type="region of interest" description="Important for cytoskeleton localization" evidence="1">
    <location>
        <begin position="82"/>
        <end position="176"/>
    </location>
</feature>
<feature type="region of interest" description="Interaction with host IRF3" evidence="1">
    <location>
        <begin position="317"/>
        <end position="486"/>
    </location>
</feature>
<feature type="short sequence motif" description="IKBKB-like degron (ILD) motif" evidence="1">
    <location>
        <begin position="479"/>
        <end position="483"/>
    </location>
</feature>
<feature type="short sequence motif" description="pLxIS motif" evidence="1">
    <location>
        <begin position="480"/>
        <end position="483"/>
    </location>
</feature>
<comment type="function">
    <text evidence="1">Plays a role in the inhibition of host innate immunity by inducing the degradation of key host factors required to activate interferon production such as IRF3, IRF5 or IRF7. Associates with components of cullin RING ligases (CRLs) including CUL1 or CUL3, which are essential multisubunit ubiquitination complexes, to modulate their activities. Recognizes the host NF-kappa-B regulator BTRC through the presence of a DSGXS motif in the C-terminal substrate recognition domain.</text>
</comment>
<comment type="subunit">
    <text evidence="1">Interacts (via C-terminus) with host IRF3; this interaction leads to IRF3 degradation. Interacts with host IRF7; this interaction leads to IRF7 degradation. Interacts with host CUL1 and CUL3. Interacts with host BTRC.</text>
</comment>
<comment type="subcellular location">
    <subcellularLocation>
        <location evidence="1">Host cytoplasm</location>
        <location evidence="1">Host cytoskeleton</location>
    </subcellularLocation>
</comment>
<comment type="domain">
    <text evidence="1">The integrity of the zinc-binding domain in NSP1 is important for degradation of host IRF3.</text>
</comment>
<comment type="domain">
    <text evidence="1">The pLxIS motif targets host IRF3 for degradation; however phosphorylation of NSP1 pLxIS motif is not required for its activity.</text>
</comment>
<comment type="PTM">
    <text evidence="1">The C-terminal region is phosphorylated by host CKII/CSNK2A1. Phosphorylation of the DSGXS motif is essential for host NF-kappa-B inhibition.</text>
</comment>
<comment type="similarity">
    <text evidence="1">Belongs to the rotavirus NSP1 family.</text>
</comment>
<name>NSP1_ROTHJ</name>
<proteinExistence type="inferred from homology"/>
<keyword id="KW-1035">Host cytoplasm</keyword>
<keyword id="KW-1037">Host cytoskeleton</keyword>
<keyword id="KW-0945">Host-virus interaction</keyword>
<keyword id="KW-1090">Inhibition of host innate immune response by virus</keyword>
<keyword id="KW-1092">Inhibition of host IRF3 by virus</keyword>
<keyword id="KW-1093">Inhibition of host IRF7 by virus</keyword>
<keyword id="KW-1100">Inhibition of host NF-kappa-B by virus</keyword>
<keyword id="KW-1113">Inhibition of host RLR pathway by virus</keyword>
<keyword id="KW-0922">Interferon antiviral system evasion</keyword>
<keyword id="KW-0479">Metal-binding</keyword>
<keyword id="KW-0597">Phosphoprotein</keyword>
<keyword id="KW-0694">RNA-binding</keyword>
<keyword id="KW-0899">Viral immunoevasion</keyword>
<protein>
    <recommendedName>
        <fullName evidence="1">Non-structural protein 1</fullName>
        <shortName evidence="1">NSP1</shortName>
    </recommendedName>
    <alternativeName>
        <fullName evidence="1">NCVP2</fullName>
    </alternativeName>
    <alternativeName>
        <fullName evidence="1">Non-structural RNA-binding protein 53</fullName>
        <shortName evidence="1">NS53</shortName>
    </alternativeName>
</protein>
<organism>
    <name type="scientific">Rotavirus A (strain RVA/Human/Japan/K8/1977/G1P3A[9])</name>
    <name type="common">RV-A</name>
    <dbReference type="NCBI Taxonomy" id="39012"/>
    <lineage>
        <taxon>Viruses</taxon>
        <taxon>Riboviria</taxon>
        <taxon>Orthornavirae</taxon>
        <taxon>Duplornaviricota</taxon>
        <taxon>Resentoviricetes</taxon>
        <taxon>Reovirales</taxon>
        <taxon>Sedoreoviridae</taxon>
        <taxon>Rotavirus</taxon>
        <taxon>Rotavirus A</taxon>
    </lineage>
</organism>
<evidence type="ECO:0000255" key="1">
    <source>
        <dbReference type="HAMAP-Rule" id="MF_04088"/>
    </source>
</evidence>
<organismHost>
    <name type="scientific">Homo sapiens</name>
    <name type="common">Human</name>
    <dbReference type="NCBI Taxonomy" id="9606"/>
</organismHost>